<comment type="similarity">
    <text evidence="1">Belongs to the UPF0457 family.</text>
</comment>
<name>Y2792_GEOTN</name>
<dbReference type="EMBL" id="CP000557">
    <property type="protein sequence ID" value="ABO68137.1"/>
    <property type="molecule type" value="Genomic_DNA"/>
</dbReference>
<dbReference type="KEGG" id="gtn:GTNG_2792"/>
<dbReference type="eggNOG" id="ENOG50332PH">
    <property type="taxonomic scope" value="Bacteria"/>
</dbReference>
<dbReference type="HOGENOM" id="CLU_174851_1_0_9"/>
<dbReference type="Proteomes" id="UP000001578">
    <property type="component" value="Chromosome"/>
</dbReference>
<dbReference type="InterPro" id="IPR055365">
    <property type="entry name" value="PH_SunI-like"/>
</dbReference>
<dbReference type="Pfam" id="PF23491">
    <property type="entry name" value="bPH_8"/>
    <property type="match status" value="1"/>
</dbReference>
<reference key="1">
    <citation type="journal article" date="2007" name="Proc. Natl. Acad. Sci. U.S.A.">
        <title>Genome and proteome of long-chain alkane degrading Geobacillus thermodenitrificans NG80-2 isolated from a deep-subsurface oil reservoir.</title>
        <authorList>
            <person name="Feng L."/>
            <person name="Wang W."/>
            <person name="Cheng J."/>
            <person name="Ren Y."/>
            <person name="Zhao G."/>
            <person name="Gao C."/>
            <person name="Tang Y."/>
            <person name="Liu X."/>
            <person name="Han W."/>
            <person name="Peng X."/>
            <person name="Liu R."/>
            <person name="Wang L."/>
        </authorList>
    </citation>
    <scope>NUCLEOTIDE SEQUENCE [LARGE SCALE GENOMIC DNA]</scope>
    <source>
        <strain>NG80-2</strain>
    </source>
</reference>
<organism>
    <name type="scientific">Geobacillus thermodenitrificans (strain NG80-2)</name>
    <dbReference type="NCBI Taxonomy" id="420246"/>
    <lineage>
        <taxon>Bacteria</taxon>
        <taxon>Bacillati</taxon>
        <taxon>Bacillota</taxon>
        <taxon>Bacilli</taxon>
        <taxon>Bacillales</taxon>
        <taxon>Anoxybacillaceae</taxon>
        <taxon>Geobacillus</taxon>
    </lineage>
</organism>
<sequence length="93" mass="10508">MMSGIKVEKLNDKLVISWLLSKIEVPISDIVKVTFDDTYGGEEKTAIRIGTPYGATDRLVILTHSNTYILFTTDAISIKNKIFSFINEQLQQK</sequence>
<gene>
    <name type="ordered locus">GTNG_2792</name>
</gene>
<protein>
    <recommendedName>
        <fullName>UPF0457 protein GTNG_2792</fullName>
    </recommendedName>
</protein>
<proteinExistence type="inferred from homology"/>
<accession>A4IS33</accession>
<feature type="chain" id="PRO_0000294496" description="UPF0457 protein GTNG_2792">
    <location>
        <begin position="1"/>
        <end position="93"/>
    </location>
</feature>
<evidence type="ECO:0000305" key="1"/>